<accession>P27615</accession>
<reference key="1">
    <citation type="journal article" date="1991" name="J. Biol. Chem.">
        <title>Cloning, sequencing, and expression of a cDNA encoding rat LIMP II, a novel 74-kDa lysosomal membrane protein related to the surface adhesion protein CD36.</title>
        <authorList>
            <person name="Vega M.A."/>
            <person name="Segui-Real B."/>
            <person name="Alcalde Garcia J."/>
            <person name="Cales C."/>
            <person name="Rodriquez F."/>
            <person name="Vanderkerckhove J."/>
            <person name="Sandoval I.V."/>
        </authorList>
    </citation>
    <scope>NUCLEOTIDE SEQUENCE [MRNA]</scope>
    <scope>PROTEIN SEQUENCE OF 2-13 AND 41-63</scope>
    <scope>SUBCELLULAR LOCATION</scope>
    <source>
        <tissue>Liver</tissue>
    </source>
</reference>
<reference key="2">
    <citation type="journal article" date="1991" name="Biochem. Biophys. Res. Commun.">
        <title>Isolation and sequencing of a cDNA clone encoding 85kDa sialoglycoprotein in rat liver lysosomal membranes.</title>
        <authorList>
            <person name="Fujita H."/>
            <person name="Ezaki J."/>
            <person name="Noguchi Y."/>
            <person name="Kono A."/>
            <person name="Himeno M."/>
            <person name="Kato K."/>
        </authorList>
    </citation>
    <scope>NUCLEOTIDE SEQUENCE [MRNA]</scope>
    <scope>PARTIAL PROTEIN SEQUENCE</scope>
    <scope>SUBCELLULAR LOCATION</scope>
    <source>
        <tissue>Liver</tissue>
    </source>
</reference>
<reference key="3">
    <citation type="journal article" date="2004" name="Genome Res.">
        <title>The status, quality, and expansion of the NIH full-length cDNA project: the Mammalian Gene Collection (MGC).</title>
        <authorList>
            <consortium name="The MGC Project Team"/>
        </authorList>
    </citation>
    <scope>NUCLEOTIDE SEQUENCE [LARGE SCALE MRNA]</scope>
    <source>
        <tissue>Prostate</tissue>
    </source>
</reference>
<reference key="4">
    <citation type="submission" date="2007-09" db="UniProtKB">
        <authorList>
            <person name="Lubec G."/>
            <person name="Kang S.U."/>
            <person name="Lubec S."/>
        </authorList>
    </citation>
    <scope>PROTEIN SEQUENCE OF 32-48; 116-121; 135-161; 228-234; 263-294; 331-348; 361-378; 382-402 AND 460-472</scope>
    <scope>IDENTIFICATION BY MASS SPECTROMETRY</scope>
    <source>
        <strain>Sprague-Dawley</strain>
        <tissue>Brain</tissue>
    </source>
</reference>
<reference key="5">
    <citation type="journal article" date="2013" name="J. Proteome Res.">
        <title>Site-specific glycan-peptide analysis for determination of N-glycoproteome heterogeneity.</title>
        <authorList>
            <person name="Parker B.L."/>
            <person name="Thaysen-Andersen M."/>
            <person name="Solis N."/>
            <person name="Scott N.E."/>
            <person name="Larsen M.R."/>
            <person name="Graham M.E."/>
            <person name="Packer N.H."/>
            <person name="Cordwell S.J."/>
        </authorList>
    </citation>
    <scope>GLYCOSYLATION [LARGE SCALE ANALYSIS] AT ASN-122 AND ASN-412</scope>
    <scope>IDENTIFICATION BY MASS SPECTROMETRY [LARGE SCALE ANALYSIS]</scope>
    <source>
        <tissue>Brain</tissue>
    </source>
</reference>
<name>SCRB2_RAT</name>
<organism>
    <name type="scientific">Rattus norvegicus</name>
    <name type="common">Rat</name>
    <dbReference type="NCBI Taxonomy" id="10116"/>
    <lineage>
        <taxon>Eukaryota</taxon>
        <taxon>Metazoa</taxon>
        <taxon>Chordata</taxon>
        <taxon>Craniata</taxon>
        <taxon>Vertebrata</taxon>
        <taxon>Euteleostomi</taxon>
        <taxon>Mammalia</taxon>
        <taxon>Eutheria</taxon>
        <taxon>Euarchontoglires</taxon>
        <taxon>Glires</taxon>
        <taxon>Rodentia</taxon>
        <taxon>Myomorpha</taxon>
        <taxon>Muroidea</taxon>
        <taxon>Muridae</taxon>
        <taxon>Murinae</taxon>
        <taxon>Rattus</taxon>
    </lineage>
</organism>
<dbReference type="EMBL" id="M68965">
    <property type="protein sequence ID" value="AAA41531.1"/>
    <property type="molecule type" value="mRNA"/>
</dbReference>
<dbReference type="EMBL" id="D10587">
    <property type="protein sequence ID" value="BAA01444.1"/>
    <property type="molecule type" value="mRNA"/>
</dbReference>
<dbReference type="EMBL" id="BC061853">
    <property type="protein sequence ID" value="AAH61853.1"/>
    <property type="molecule type" value="mRNA"/>
</dbReference>
<dbReference type="PIR" id="JH0241">
    <property type="entry name" value="JH0241"/>
</dbReference>
<dbReference type="RefSeq" id="NP_446453.1">
    <property type="nucleotide sequence ID" value="NM_054001.2"/>
</dbReference>
<dbReference type="SMR" id="P27615"/>
<dbReference type="BioGRID" id="250678">
    <property type="interactions" value="1"/>
</dbReference>
<dbReference type="FunCoup" id="P27615">
    <property type="interactions" value="843"/>
</dbReference>
<dbReference type="IntAct" id="P27615">
    <property type="interactions" value="3"/>
</dbReference>
<dbReference type="STRING" id="10116.ENSRNOP00000003052"/>
<dbReference type="GlyCosmos" id="P27615">
    <property type="glycosylation" value="11 sites, 6 glycans"/>
</dbReference>
<dbReference type="GlyGen" id="P27615">
    <property type="glycosylation" value="11 sites, 6 N-linked glycans (2 sites)"/>
</dbReference>
<dbReference type="iPTMnet" id="P27615"/>
<dbReference type="PhosphoSitePlus" id="P27615"/>
<dbReference type="SwissPalm" id="P27615"/>
<dbReference type="jPOST" id="P27615"/>
<dbReference type="PaxDb" id="10116-ENSRNOP00000003052"/>
<dbReference type="Ensembl" id="ENSRNOT00000103647.1">
    <property type="protein sequence ID" value="ENSRNOP00000097524.1"/>
    <property type="gene ID" value="ENSRNOG00000002225.7"/>
</dbReference>
<dbReference type="GeneID" id="117106"/>
<dbReference type="KEGG" id="rno:117106"/>
<dbReference type="UCSC" id="RGD:621882">
    <property type="organism name" value="rat"/>
</dbReference>
<dbReference type="AGR" id="RGD:621882"/>
<dbReference type="CTD" id="950"/>
<dbReference type="RGD" id="621882">
    <property type="gene designation" value="Scarb2"/>
</dbReference>
<dbReference type="eggNOG" id="KOG3776">
    <property type="taxonomic scope" value="Eukaryota"/>
</dbReference>
<dbReference type="GeneTree" id="ENSGT00940000153372"/>
<dbReference type="HOGENOM" id="CLU_019853_3_0_1"/>
<dbReference type="InParanoid" id="P27615"/>
<dbReference type="OrthoDB" id="17780at9989"/>
<dbReference type="PhylomeDB" id="P27615"/>
<dbReference type="TreeFam" id="TF317925"/>
<dbReference type="Reactome" id="R-RNO-8856825">
    <property type="pathway name" value="Cargo recognition for clathrin-mediated endocytosis"/>
</dbReference>
<dbReference type="Reactome" id="R-RNO-8856828">
    <property type="pathway name" value="Clathrin-mediated endocytosis"/>
</dbReference>
<dbReference type="PRO" id="PR:P27615"/>
<dbReference type="Proteomes" id="UP000002494">
    <property type="component" value="Chromosome 14"/>
</dbReference>
<dbReference type="Bgee" id="ENSRNOG00000002225">
    <property type="expression patterns" value="Expressed in lung and 19 other cell types or tissues"/>
</dbReference>
<dbReference type="GO" id="GO:0030666">
    <property type="term" value="C:endocytic vesicle membrane"/>
    <property type="evidence" value="ECO:0000266"/>
    <property type="project" value="RGD"/>
</dbReference>
<dbReference type="GO" id="GO:0043202">
    <property type="term" value="C:lysosomal lumen"/>
    <property type="evidence" value="ECO:0000266"/>
    <property type="project" value="RGD"/>
</dbReference>
<dbReference type="GO" id="GO:0005765">
    <property type="term" value="C:lysosomal membrane"/>
    <property type="evidence" value="ECO:0000250"/>
    <property type="project" value="UniProtKB"/>
</dbReference>
<dbReference type="GO" id="GO:0005886">
    <property type="term" value="C:plasma membrane"/>
    <property type="evidence" value="ECO:0000266"/>
    <property type="project" value="RGD"/>
</dbReference>
<dbReference type="GO" id="GO:0038024">
    <property type="term" value="F:cargo receptor activity"/>
    <property type="evidence" value="ECO:0000266"/>
    <property type="project" value="RGD"/>
</dbReference>
<dbReference type="GO" id="GO:0015485">
    <property type="term" value="F:cholesterol binding"/>
    <property type="evidence" value="ECO:0000266"/>
    <property type="project" value="RGD"/>
</dbReference>
<dbReference type="GO" id="GO:0019899">
    <property type="term" value="F:enzyme binding"/>
    <property type="evidence" value="ECO:0000266"/>
    <property type="project" value="RGD"/>
</dbReference>
<dbReference type="GO" id="GO:0031210">
    <property type="term" value="F:phosphatidylcholine binding"/>
    <property type="evidence" value="ECO:0000266"/>
    <property type="project" value="RGD"/>
</dbReference>
<dbReference type="GO" id="GO:0001786">
    <property type="term" value="F:phosphatidylserine binding"/>
    <property type="evidence" value="ECO:0000266"/>
    <property type="project" value="RGD"/>
</dbReference>
<dbReference type="GO" id="GO:0042803">
    <property type="term" value="F:protein homodimerization activity"/>
    <property type="evidence" value="ECO:0000266"/>
    <property type="project" value="RGD"/>
</dbReference>
<dbReference type="GO" id="GO:0051087">
    <property type="term" value="F:protein-folding chaperone binding"/>
    <property type="evidence" value="ECO:0000266"/>
    <property type="project" value="RGD"/>
</dbReference>
<dbReference type="GO" id="GO:0005044">
    <property type="term" value="F:scavenger receptor activity"/>
    <property type="evidence" value="ECO:0000266"/>
    <property type="project" value="RGD"/>
</dbReference>
<dbReference type="GO" id="GO:0015917">
    <property type="term" value="P:aminophospholipid transport"/>
    <property type="evidence" value="ECO:0000266"/>
    <property type="project" value="RGD"/>
</dbReference>
<dbReference type="GO" id="GO:0099638">
    <property type="term" value="P:endosome to plasma membrane protein transport"/>
    <property type="evidence" value="ECO:0000266"/>
    <property type="project" value="RGD"/>
</dbReference>
<dbReference type="GO" id="GO:0010976">
    <property type="term" value="P:positive regulation of neuron projection development"/>
    <property type="evidence" value="ECO:0000314"/>
    <property type="project" value="ParkinsonsUK-UCL"/>
</dbReference>
<dbReference type="GO" id="GO:0006622">
    <property type="term" value="P:protein targeting to lysosome"/>
    <property type="evidence" value="ECO:0000266"/>
    <property type="project" value="RGD"/>
</dbReference>
<dbReference type="GO" id="GO:0006898">
    <property type="term" value="P:receptor-mediated endocytosis"/>
    <property type="evidence" value="ECO:0000266"/>
    <property type="project" value="RGD"/>
</dbReference>
<dbReference type="GO" id="GO:0043470">
    <property type="term" value="P:regulation of carbohydrate catabolic process"/>
    <property type="evidence" value="ECO:0000266"/>
    <property type="project" value="RGD"/>
</dbReference>
<dbReference type="GO" id="GO:0007605">
    <property type="term" value="P:sensory perception of sound"/>
    <property type="evidence" value="ECO:0000266"/>
    <property type="project" value="RGD"/>
</dbReference>
<dbReference type="InterPro" id="IPR002159">
    <property type="entry name" value="CD36_fam"/>
</dbReference>
<dbReference type="InterPro" id="IPR005429">
    <property type="entry name" value="LimpII"/>
</dbReference>
<dbReference type="PANTHER" id="PTHR11923:SF51">
    <property type="entry name" value="LYSOSOME MEMBRANE PROTEIN 2"/>
    <property type="match status" value="1"/>
</dbReference>
<dbReference type="PANTHER" id="PTHR11923">
    <property type="entry name" value="SCAVENGER RECEPTOR CLASS B TYPE-1 SR-B1"/>
    <property type="match status" value="1"/>
</dbReference>
<dbReference type="Pfam" id="PF01130">
    <property type="entry name" value="CD36"/>
    <property type="match status" value="1"/>
</dbReference>
<dbReference type="PRINTS" id="PR01609">
    <property type="entry name" value="CD36FAMILY"/>
</dbReference>
<dbReference type="PRINTS" id="PR01611">
    <property type="entry name" value="LIMPII"/>
</dbReference>
<sequence length="478" mass="54091">MARCCFYTAGTLSLLLLVTSVTLLVARVFQKAVDQTIEKNMVLQNGTKVFDSWEKPPLPVYIQFYFFNVTNPEEILQGEIPLLEEVGPYTYRELRNKANVQFGENGTTISAVTNKAYIFERNQSVGDPTVDLIRTINIPLLTVVEMAQQPFLREIIEAMLKAYQQTLFVTHTVHELLWGYKDEVLSLVHIFRPDVSPNFGLFYERNGTNDGEYVFLTGEDNYLNFTKIVEWNGKTSLDWWTTDTCNMINGTDGDSFHPLISKDETLYIFPSDFCRSVYITFSSFENVEGLPAFRYKVPAEILANSSENAGFCIPEGNCMDAGVLNVSICKNGAPIIMSFPHFYQADEKFVSAIKGMRPNKEEHESFVDINPLTGIILRGAKRFQINTYVKKLDDFVETGNIRTMVFPVMYLNESVLIDKETASQLKSVINTTLIVTNIPYIIMALGVFFGLIFTWLACRGQGSTDEGTADERAPLIRT</sequence>
<keyword id="KW-0903">Direct protein sequencing</keyword>
<keyword id="KW-1015">Disulfide bond</keyword>
<keyword id="KW-0325">Glycoprotein</keyword>
<keyword id="KW-0449">Lipoprotein</keyword>
<keyword id="KW-0458">Lysosome</keyword>
<keyword id="KW-0472">Membrane</keyword>
<keyword id="KW-0564">Palmitate</keyword>
<keyword id="KW-0675">Receptor</keyword>
<keyword id="KW-1185">Reference proteome</keyword>
<keyword id="KW-0812">Transmembrane</keyword>
<keyword id="KW-1133">Transmembrane helix</keyword>
<evidence type="ECO:0000250" key="1"/>
<evidence type="ECO:0000250" key="2">
    <source>
        <dbReference type="UniProtKB" id="O35114"/>
    </source>
</evidence>
<evidence type="ECO:0000255" key="3"/>
<evidence type="ECO:0000269" key="4">
    <source>
    </source>
</evidence>
<evidence type="ECO:0000269" key="5">
    <source>
    </source>
</evidence>
<evidence type="ECO:0000305" key="6"/>
<evidence type="ECO:0007744" key="7">
    <source>
    </source>
</evidence>
<proteinExistence type="evidence at protein level"/>
<feature type="initiator methionine" description="Removed" evidence="4">
    <location>
        <position position="1"/>
    </location>
</feature>
<feature type="chain" id="PRO_0000144157" description="Lysosome membrane protein 2">
    <location>
        <begin position="2"/>
        <end position="478"/>
    </location>
</feature>
<feature type="topological domain" description="Cytoplasmic" evidence="3">
    <location>
        <begin position="2"/>
        <end position="4"/>
    </location>
</feature>
<feature type="transmembrane region" description="Helical" evidence="3">
    <location>
        <begin position="5"/>
        <end position="27"/>
    </location>
</feature>
<feature type="topological domain" description="Lumenal" evidence="3">
    <location>
        <begin position="28"/>
        <end position="433"/>
    </location>
</feature>
<feature type="transmembrane region" description="Helical" evidence="3">
    <location>
        <begin position="434"/>
        <end position="459"/>
    </location>
</feature>
<feature type="topological domain" description="Cytoplasmic" evidence="3">
    <location>
        <begin position="460"/>
        <end position="478"/>
    </location>
</feature>
<feature type="region of interest" description="Important for interaction with GBA1" evidence="1">
    <location>
        <begin position="155"/>
        <end position="191"/>
    </location>
</feature>
<feature type="glycosylation site" description="N-linked (GlcNAc...) asparagine" evidence="3">
    <location>
        <position position="45"/>
    </location>
</feature>
<feature type="glycosylation site" description="N-linked (GlcNAc...) asparagine" evidence="3">
    <location>
        <position position="68"/>
    </location>
</feature>
<feature type="glycosylation site" description="N-linked (GlcNAc...) asparagine" evidence="3">
    <location>
        <position position="105"/>
    </location>
</feature>
<feature type="glycosylation site" description="N-linked (GlcNAc...) asparagine" evidence="7">
    <location>
        <position position="122"/>
    </location>
</feature>
<feature type="glycosylation site" description="N-linked (GlcNAc...) asparagine" evidence="3">
    <location>
        <position position="206"/>
    </location>
</feature>
<feature type="glycosylation site" description="N-linked (GlcNAc...) asparagine" evidence="3">
    <location>
        <position position="224"/>
    </location>
</feature>
<feature type="glycosylation site" description="N-linked (GlcNAc...) asparagine" evidence="3">
    <location>
        <position position="249"/>
    </location>
</feature>
<feature type="glycosylation site" description="N-linked (GlcNAc...) asparagine" evidence="3">
    <location>
        <position position="304"/>
    </location>
</feature>
<feature type="glycosylation site" description="N-linked (GlcNAc...) asparagine" evidence="3">
    <location>
        <position position="325"/>
    </location>
</feature>
<feature type="glycosylation site" description="N-linked (GlcNAc...) asparagine" evidence="7">
    <location>
        <position position="412"/>
    </location>
</feature>
<feature type="glycosylation site" description="N-linked (GlcNAc...) asparagine" evidence="3">
    <location>
        <position position="430"/>
    </location>
</feature>
<feature type="disulfide bond" evidence="1">
    <location>
        <begin position="274"/>
        <end position="329"/>
    </location>
</feature>
<feature type="disulfide bond" evidence="1">
    <location>
        <begin position="312"/>
        <end position="318"/>
    </location>
</feature>
<protein>
    <recommendedName>
        <fullName>Lysosome membrane protein 2</fullName>
    </recommendedName>
    <alternativeName>
        <fullName>85 kDa lysosomal membrane sialoglycoprotein</fullName>
        <shortName>LGP85</shortName>
    </alternativeName>
    <alternativeName>
        <fullName>CD36 antigen-like 2</fullName>
    </alternativeName>
    <alternativeName>
        <fullName>Lysosome membrane protein II</fullName>
        <shortName>LIMP II</shortName>
    </alternativeName>
    <alternativeName>
        <fullName>Scavenger receptor class B member 2</fullName>
    </alternativeName>
    <cdAntigenName>CD36</cdAntigenName>
</protein>
<comment type="function">
    <text evidence="2">Acts as a lysosomal receptor for glucosylceramidase (GBA1) targeting.</text>
</comment>
<comment type="subunit">
    <text evidence="2">Interacts with GBA1.</text>
</comment>
<comment type="subcellular location">
    <subcellularLocation>
        <location evidence="4 5">Lysosome membrane</location>
        <topology evidence="4 5">Multi-pass membrane protein</topology>
    </subcellularLocation>
</comment>
<comment type="PTM">
    <text>Acylated by palmitic acid group(s).</text>
</comment>
<comment type="similarity">
    <text evidence="6">Belongs to the CD36 family.</text>
</comment>
<gene>
    <name type="primary">Scarb2</name>
    <name type="synonym">Cd36l2</name>
    <name type="synonym">Limpii</name>
</gene>